<sequence length="223" mass="26332">MKFFIFTCLLAVALAKHKMEHVSSSEEPINISQEIYKQEKNMAIHPRKEKLCTTSCEEVVRNADEEEYSIRSSSEESAEVAPEEVKITVDDKHYQKALNEINQFYQKFPQYLQYLYQGPIVLNPWDQVKRNAGPFTPTVNREQLSTSEENSKKTIDMESTEVFTKKTKLTEEEKNRLNFLKKISQYYQKFAWPQYLKTVDQHQKAMKPWTQPKTNAIPYVRYL</sequence>
<dbReference type="EMBL" id="X03238">
    <property type="protein sequence ID" value="CAA26983.1"/>
    <property type="molecule type" value="mRNA"/>
</dbReference>
<dbReference type="PIR" id="A25070">
    <property type="entry name" value="KASHS2"/>
</dbReference>
<dbReference type="RefSeq" id="NP_001009363.1">
    <property type="nucleotide sequence ID" value="NM_001009363.1"/>
</dbReference>
<dbReference type="SMR" id="P04654"/>
<dbReference type="STRING" id="9940.ENSOARP00000011473"/>
<dbReference type="Allergome" id="1241">
    <property type="allergen name" value="Ovi a 8"/>
</dbReference>
<dbReference type="Allergome" id="2963">
    <property type="allergen name" value="Ovi a 10"/>
</dbReference>
<dbReference type="PaxDb" id="9940-ENSOARP00000011473"/>
<dbReference type="GeneID" id="443383"/>
<dbReference type="KEGG" id="oas:443383"/>
<dbReference type="CTD" id="282209"/>
<dbReference type="eggNOG" id="ENOG502TDWX">
    <property type="taxonomic scope" value="Eukaryota"/>
</dbReference>
<dbReference type="OrthoDB" id="9564348at2759"/>
<dbReference type="Proteomes" id="UP000002356">
    <property type="component" value="Unplaced"/>
</dbReference>
<dbReference type="GO" id="GO:0005615">
    <property type="term" value="C:extracellular space"/>
    <property type="evidence" value="ECO:0007669"/>
    <property type="project" value="TreeGrafter"/>
</dbReference>
<dbReference type="GO" id="GO:0042803">
    <property type="term" value="F:protein homodimerization activity"/>
    <property type="evidence" value="ECO:0007669"/>
    <property type="project" value="TreeGrafter"/>
</dbReference>
<dbReference type="GO" id="GO:0035375">
    <property type="term" value="F:zymogen binding"/>
    <property type="evidence" value="ECO:0007669"/>
    <property type="project" value="TreeGrafter"/>
</dbReference>
<dbReference type="InterPro" id="IPR011175">
    <property type="entry name" value="Alpha-s2_casein"/>
</dbReference>
<dbReference type="InterPro" id="IPR001588">
    <property type="entry name" value="Casein"/>
</dbReference>
<dbReference type="InterPro" id="IPR031305">
    <property type="entry name" value="Casein_CS"/>
</dbReference>
<dbReference type="PANTHER" id="PTHR16656">
    <property type="entry name" value="ALPHA-S2-CASEIN-LIKE B"/>
    <property type="match status" value="1"/>
</dbReference>
<dbReference type="PANTHER" id="PTHR16656:SF5">
    <property type="entry name" value="ALPHA-S2-CASEIN-LIKE B"/>
    <property type="match status" value="1"/>
</dbReference>
<dbReference type="Pfam" id="PF00363">
    <property type="entry name" value="Casein"/>
    <property type="match status" value="1"/>
</dbReference>
<dbReference type="PIRSF" id="PIRSF002371">
    <property type="entry name" value="Alpha-s2-casein"/>
    <property type="match status" value="1"/>
</dbReference>
<dbReference type="PROSITE" id="PS00306">
    <property type="entry name" value="CASEIN_ALPHA_BETA"/>
    <property type="match status" value="1"/>
</dbReference>
<name>CASA2_SHEEP</name>
<proteinExistence type="evidence at transcript level"/>
<protein>
    <recommendedName>
        <fullName>Alpha-S2-casein</fullName>
    </recommendedName>
</protein>
<organism>
    <name type="scientific">Ovis aries</name>
    <name type="common">Sheep</name>
    <dbReference type="NCBI Taxonomy" id="9940"/>
    <lineage>
        <taxon>Eukaryota</taxon>
        <taxon>Metazoa</taxon>
        <taxon>Chordata</taxon>
        <taxon>Craniata</taxon>
        <taxon>Vertebrata</taxon>
        <taxon>Euteleostomi</taxon>
        <taxon>Mammalia</taxon>
        <taxon>Eutheria</taxon>
        <taxon>Laurasiatheria</taxon>
        <taxon>Artiodactyla</taxon>
        <taxon>Ruminantia</taxon>
        <taxon>Pecora</taxon>
        <taxon>Bovidae</taxon>
        <taxon>Caprinae</taxon>
        <taxon>Ovis</taxon>
    </lineage>
</organism>
<gene>
    <name type="primary">CSN1S2</name>
</gene>
<accession>P04654</accession>
<evidence type="ECO:0000250" key="1"/>
<evidence type="ECO:0000250" key="2">
    <source>
        <dbReference type="UniProtKB" id="O97944"/>
    </source>
</evidence>
<evidence type="ECO:0000250" key="3">
    <source>
        <dbReference type="UniProtKB" id="P02663"/>
    </source>
</evidence>
<evidence type="ECO:0000305" key="4"/>
<feature type="signal peptide" evidence="1">
    <location>
        <begin position="1"/>
        <end position="15"/>
    </location>
</feature>
<feature type="chain" id="PRO_0000004469" description="Alpha-S2-casein">
    <location>
        <begin position="16"/>
        <end position="223"/>
    </location>
</feature>
<feature type="repeat">
    <location>
        <begin position="77"/>
        <end position="141"/>
    </location>
</feature>
<feature type="repeat">
    <location>
        <begin position="159"/>
        <end position="223"/>
    </location>
</feature>
<feature type="modified residue" description="Phosphoserine" evidence="3">
    <location>
        <position position="23"/>
    </location>
</feature>
<feature type="modified residue" description="Phosphoserine" evidence="3">
    <location>
        <position position="24"/>
    </location>
</feature>
<feature type="modified residue" description="Phosphoserine" evidence="3">
    <location>
        <position position="25"/>
    </location>
</feature>
<feature type="modified residue" description="Phosphoserine" evidence="3">
    <location>
        <position position="72"/>
    </location>
</feature>
<feature type="modified residue" description="Phosphoserine" evidence="3">
    <location>
        <position position="73"/>
    </location>
</feature>
<feature type="modified residue" description="Phosphoserine" evidence="3">
    <location>
        <position position="74"/>
    </location>
</feature>
<feature type="modified residue" description="Phosphoserine" evidence="3">
    <location>
        <position position="77"/>
    </location>
</feature>
<feature type="modified residue" description="Phosphoserine" evidence="2">
    <location>
        <position position="145"/>
    </location>
</feature>
<feature type="modified residue" description="Phosphoserine" evidence="2">
    <location>
        <position position="147"/>
    </location>
</feature>
<feature type="modified residue" description="Phosphoserine" evidence="2">
    <location>
        <position position="151"/>
    </location>
</feature>
<feature type="modified residue" description="Phosphoserine" evidence="3">
    <location>
        <position position="159"/>
    </location>
</feature>
<feature type="sequence variant">
    <original>D</original>
    <variation>N</variation>
    <location>
        <position position="64"/>
    </location>
</feature>
<feature type="sequence conflict" description="In Ref. 2; no nucleotide entry." evidence="4" ref="2">
    <original>Y</original>
    <variation>T</variation>
    <location>
        <position position="94"/>
    </location>
</feature>
<reference key="1">
    <citation type="journal article" date="1985" name="Biochimie">
        <title>Complete sequence of ovine alpha s2-casein messenger RNA.</title>
        <authorList>
            <person name="Boisnard M."/>
            <person name="Petrissant G."/>
        </authorList>
    </citation>
    <scope>NUCLEOTIDE SEQUENCE [MRNA]</scope>
</reference>
<reference key="2">
    <citation type="journal article" date="1991" name="Eur. J. Biochem.">
        <title>Multiple mRNA species code for two non-allelic forms of ovine alpha s2-casein.</title>
        <authorList>
            <person name="Boisnard M."/>
            <person name="Hue D."/>
            <person name="Bouniol C."/>
            <person name="Mercier J.-C."/>
            <person name="Gaye P."/>
        </authorList>
    </citation>
    <scope>NUCLEOTIDE SEQUENCE [MRNA]</scope>
</reference>
<comment type="function">
    <text>Important role in the capacity of milk to transport calcium phosphate.</text>
</comment>
<comment type="subcellular location">
    <subcellularLocation>
        <location>Secreted</location>
    </subcellularLocation>
</comment>
<comment type="tissue specificity">
    <text>Mammary gland specific. Secreted in milk.</text>
</comment>
<comment type="similarity">
    <text evidence="4">Belongs to the alpha-casein family.</text>
</comment>
<keyword id="KW-0494">Milk protein</keyword>
<keyword id="KW-0597">Phosphoprotein</keyword>
<keyword id="KW-1185">Reference proteome</keyword>
<keyword id="KW-0677">Repeat</keyword>
<keyword id="KW-0964">Secreted</keyword>
<keyword id="KW-0732">Signal</keyword>